<gene>
    <name type="ordered locus">BC_4380</name>
</gene>
<protein>
    <recommendedName>
        <fullName evidence="1">UPF0473 protein BC_4380</fullName>
    </recommendedName>
</protein>
<reference key="1">
    <citation type="journal article" date="2003" name="Nature">
        <title>Genome sequence of Bacillus cereus and comparative analysis with Bacillus anthracis.</title>
        <authorList>
            <person name="Ivanova N."/>
            <person name="Sorokin A."/>
            <person name="Anderson I."/>
            <person name="Galleron N."/>
            <person name="Candelon B."/>
            <person name="Kapatral V."/>
            <person name="Bhattacharyya A."/>
            <person name="Reznik G."/>
            <person name="Mikhailova N."/>
            <person name="Lapidus A."/>
            <person name="Chu L."/>
            <person name="Mazur M."/>
            <person name="Goltsman E."/>
            <person name="Larsen N."/>
            <person name="D'Souza M."/>
            <person name="Walunas T."/>
            <person name="Grechkin Y."/>
            <person name="Pusch G."/>
            <person name="Haselkorn R."/>
            <person name="Fonstein M."/>
            <person name="Ehrlich S.D."/>
            <person name="Overbeek R."/>
            <person name="Kyrpides N.C."/>
        </authorList>
    </citation>
    <scope>NUCLEOTIDE SEQUENCE [LARGE SCALE GENOMIC DNA]</scope>
    <source>
        <strain>ATCC 14579 / DSM 31 / CCUG 7414 / JCM 2152 / NBRC 15305 / NCIMB 9373 / NCTC 2599 / NRRL B-3711</strain>
    </source>
</reference>
<dbReference type="EMBL" id="AE016877">
    <property type="protein sequence ID" value="AAP11293.1"/>
    <property type="molecule type" value="Genomic_DNA"/>
</dbReference>
<dbReference type="RefSeq" id="NP_834092.1">
    <property type="nucleotide sequence ID" value="NC_004722.1"/>
</dbReference>
<dbReference type="RefSeq" id="WP_000392730.1">
    <property type="nucleotide sequence ID" value="NZ_CP138336.1"/>
</dbReference>
<dbReference type="STRING" id="226900.BC_4380"/>
<dbReference type="KEGG" id="bce:BC4380"/>
<dbReference type="PATRIC" id="fig|226900.8.peg.4530"/>
<dbReference type="HOGENOM" id="CLU_146610_2_1_9"/>
<dbReference type="OrthoDB" id="2086132at2"/>
<dbReference type="Proteomes" id="UP000001417">
    <property type="component" value="Chromosome"/>
</dbReference>
<dbReference type="HAMAP" id="MF_01448">
    <property type="entry name" value="UPF0473"/>
    <property type="match status" value="1"/>
</dbReference>
<dbReference type="InterPro" id="IPR009711">
    <property type="entry name" value="UPF0473"/>
</dbReference>
<dbReference type="NCBIfam" id="NF010216">
    <property type="entry name" value="PRK13678.1-3"/>
    <property type="match status" value="1"/>
</dbReference>
<dbReference type="PANTHER" id="PTHR40066">
    <property type="entry name" value="UPF0473 PROTEIN CBO2561/CLC_2432"/>
    <property type="match status" value="1"/>
</dbReference>
<dbReference type="PANTHER" id="PTHR40066:SF1">
    <property type="entry name" value="UPF0473 PROTEIN CBO2561_CLC_2432"/>
    <property type="match status" value="1"/>
</dbReference>
<dbReference type="Pfam" id="PF06949">
    <property type="entry name" value="DUF1292"/>
    <property type="match status" value="1"/>
</dbReference>
<name>Y4380_BACCR</name>
<evidence type="ECO:0000255" key="1">
    <source>
        <dbReference type="HAMAP-Rule" id="MF_01448"/>
    </source>
</evidence>
<sequence length="92" mass="10599">MEERQITIVDEKGNEHLCEIIFTFDADKFGKKSYVIFSPIGEVDEDGDPIYDAMAYEQNEEEGGVLLPIESEEEWEMVQETFNTIADEQEAE</sequence>
<organism>
    <name type="scientific">Bacillus cereus (strain ATCC 14579 / DSM 31 / CCUG 7414 / JCM 2152 / NBRC 15305 / NCIMB 9373 / NCTC 2599 / NRRL B-3711)</name>
    <dbReference type="NCBI Taxonomy" id="226900"/>
    <lineage>
        <taxon>Bacteria</taxon>
        <taxon>Bacillati</taxon>
        <taxon>Bacillota</taxon>
        <taxon>Bacilli</taxon>
        <taxon>Bacillales</taxon>
        <taxon>Bacillaceae</taxon>
        <taxon>Bacillus</taxon>
        <taxon>Bacillus cereus group</taxon>
    </lineage>
</organism>
<proteinExistence type="inferred from homology"/>
<feature type="chain" id="PRO_0000304814" description="UPF0473 protein BC_4380">
    <location>
        <begin position="1"/>
        <end position="92"/>
    </location>
</feature>
<comment type="similarity">
    <text evidence="1">Belongs to the UPF0473 family.</text>
</comment>
<keyword id="KW-1185">Reference proteome</keyword>
<accession>Q812S0</accession>